<comment type="subcellular location">
    <subcellularLocation>
        <location evidence="2">Cell membrane</location>
        <topology evidence="2">Single-pass membrane protein</topology>
    </subcellularLocation>
</comment>
<dbReference type="EMBL" id="AF188935">
    <property type="protein sequence ID" value="AAF13610.1"/>
    <property type="molecule type" value="Genomic_DNA"/>
</dbReference>
<dbReference type="EMBL" id="AE011191">
    <property type="protein sequence ID" value="AAM26165.1"/>
    <property type="molecule type" value="Genomic_DNA"/>
</dbReference>
<dbReference type="EMBL" id="AE017335">
    <property type="protein sequence ID" value="AAT28934.2"/>
    <property type="molecule type" value="Genomic_DNA"/>
</dbReference>
<dbReference type="RefSeq" id="NP_053160.1">
    <property type="nucleotide sequence ID" value="NC_002146.1"/>
</dbReference>
<dbReference type="RefSeq" id="WP_000023102.1">
    <property type="nucleotide sequence ID" value="NZ_VTZL01000009.1"/>
</dbReference>
<dbReference type="SMR" id="Q9RN27"/>
<dbReference type="GeneID" id="45025319"/>
<dbReference type="KEGG" id="banh:HYU01_29020"/>
<dbReference type="KEGG" id="bar:GBAA_pXO2_0004"/>
<dbReference type="HOGENOM" id="CLU_975396_0_0_9"/>
<dbReference type="OMA" id="EDYEQHA"/>
<dbReference type="Proteomes" id="UP000000594">
    <property type="component" value="Plasmid pXO2"/>
</dbReference>
<dbReference type="GO" id="GO:0005886">
    <property type="term" value="C:plasma membrane"/>
    <property type="evidence" value="ECO:0007669"/>
    <property type="project" value="UniProtKB-SubCell"/>
</dbReference>
<gene>
    <name type="ordered locus">pXO2-05</name>
    <name type="ordered locus">BXB0004</name>
    <name type="ordered locus">GBAA_pXO2_0004</name>
</gene>
<keyword id="KW-1003">Cell membrane</keyword>
<keyword id="KW-0472">Membrane</keyword>
<keyword id="KW-0614">Plasmid</keyword>
<keyword id="KW-1185">Reference proteome</keyword>
<keyword id="KW-0812">Transmembrane</keyword>
<keyword id="KW-1133">Transmembrane helix</keyword>
<accession>Q9RN27</accession>
<feature type="chain" id="PRO_0000216827" description="Uncharacterized protein pXO2-05/BXB0004/GBAA_pXO2_0004">
    <location>
        <begin position="1"/>
        <end position="282"/>
    </location>
</feature>
<feature type="transmembrane region" description="Helical" evidence="1">
    <location>
        <begin position="22"/>
        <end position="42"/>
    </location>
</feature>
<name>Y6504_BACAN</name>
<protein>
    <recommendedName>
        <fullName>Uncharacterized protein pXO2-05/BXB0004/GBAA_pXO2_0004</fullName>
    </recommendedName>
</protein>
<sequence length="282" mass="33263">MSIKFWMNKEGRKPANTKRKAYLFTLGSFVTMFFVLCISPVFSGATYKFEEMKIGEYQSLSSTVKIAVAKKEYNPDNQTLRIDYELRADNDSQILSNMKYKVENKYIKQKDNNVKTKVYRASDNYIVVISENVPEEFGVVSSVVKPEYIHPELQNDVDDLKERSMKMYVLENEKLINRELKKKSKDFYEREYLAFSQQALRKEIEKKMEDKSSAMKQLKIKNEQLTKEMEYQTEGEKVKTKNTINSNESTINNHQKEIDVLKEDIKMKEKKIQLLDEKKKTI</sequence>
<proteinExistence type="predicted"/>
<reference key="1">
    <citation type="journal article" date="1999" name="J. Appl. Microbiol.">
        <title>Sequence, assembly and analysis of pXO1 and pXO2.</title>
        <authorList>
            <person name="Okinaka R.T."/>
            <person name="Cloud K."/>
            <person name="Hampton O."/>
            <person name="Hoffmaster A."/>
            <person name="Hill K.K."/>
            <person name="Keim P."/>
            <person name="Koehler T."/>
            <person name="Lamke G."/>
            <person name="Kumano S."/>
            <person name="Manter D."/>
            <person name="Martinez Y."/>
            <person name="Ricke D."/>
            <person name="Svensson R."/>
            <person name="Jackson P.J."/>
        </authorList>
    </citation>
    <scope>NUCLEOTIDE SEQUENCE [GENOMIC DNA]</scope>
    <source>
        <strain>Pasteur</strain>
    </source>
</reference>
<reference key="2">
    <citation type="journal article" date="2002" name="Science">
        <title>Comparative genome sequencing for discovery of novel polymorphisms in Bacillus anthracis.</title>
        <authorList>
            <person name="Read T.D."/>
            <person name="Salzberg S.L."/>
            <person name="Pop M."/>
            <person name="Shumway M.F."/>
            <person name="Umayam L."/>
            <person name="Jiang L."/>
            <person name="Holtzapple E."/>
            <person name="Busch J.D."/>
            <person name="Smith K.L."/>
            <person name="Schupp J.M."/>
            <person name="Solomon D."/>
            <person name="Keim P."/>
            <person name="Fraser C.M."/>
        </authorList>
    </citation>
    <scope>NUCLEOTIDE SEQUENCE [GENOMIC DNA]</scope>
    <source>
        <strain>Ames / isolate Florida / A2012</strain>
    </source>
</reference>
<reference key="3">
    <citation type="journal article" date="2009" name="J. Bacteriol.">
        <title>The complete genome sequence of Bacillus anthracis Ames 'Ancestor'.</title>
        <authorList>
            <person name="Ravel J."/>
            <person name="Jiang L."/>
            <person name="Stanley S.T."/>
            <person name="Wilson M.R."/>
            <person name="Decker R.S."/>
            <person name="Read T.D."/>
            <person name="Worsham P."/>
            <person name="Keim P.S."/>
            <person name="Salzberg S.L."/>
            <person name="Fraser-Liggett C.M."/>
            <person name="Rasko D.A."/>
        </authorList>
    </citation>
    <scope>NUCLEOTIDE SEQUENCE [LARGE SCALE GENOMIC DNA]</scope>
    <source>
        <strain>Ames ancestor</strain>
    </source>
</reference>
<evidence type="ECO:0000255" key="1"/>
<evidence type="ECO:0000305" key="2"/>
<geneLocation type="plasmid">
    <name>pXO2</name>
</geneLocation>
<organism>
    <name type="scientific">Bacillus anthracis</name>
    <dbReference type="NCBI Taxonomy" id="1392"/>
    <lineage>
        <taxon>Bacteria</taxon>
        <taxon>Bacillati</taxon>
        <taxon>Bacillota</taxon>
        <taxon>Bacilli</taxon>
        <taxon>Bacillales</taxon>
        <taxon>Bacillaceae</taxon>
        <taxon>Bacillus</taxon>
        <taxon>Bacillus cereus group</taxon>
    </lineage>
</organism>